<sequence>MGFTTKIIFLYNLVLVYAGFDDPRKAIELVQKRYGRPCDCSGGQVSEPPSDRVSQVTCSGKTAYLMPDQRWKCKSIPKDTSPSGPLQECPCNSYQSSVHSSCYTSYQQCRSGNKTYYTATLLKTQTGGTSDVQVLGSTNKLIQSPCNGIKGQSICWSTTAPIHVSDGGGPLDTTRIKSVQRKLEEIHKALYPELQYHPLAIPKVRDNLMVDAQTLNILNATYNLLLMSNTSLVDDCWLCLKLGPPTPLAIPNFLLSYVTRSSDNISCLIIPPLLVQPMQFSNSSCLFSPSYNSTEEIDLGHVAFSNCTSITNVTGPICAVNGSVFLCGNNMAYTYLPTNWTGLCVLATLLPDIDIIPGDEPVPIPAIDHFIYRPKRAIQFIPLLAGLGITAAFTTGATGLGVSVTQYTKLSNQLISDVQILSSTIQDLQDQVDSLAEVVLQNRRGLDLLTAEQGGICLALQEKCCFYVNKSGIVRDKIKTLQEELERRRKDLASNPLWTGLQGLLPYLLPFLGPLLTLLLLLTIGPCIFNRLTAFINDKLNIIHAMVLTQQYQVLRTDEEAQD</sequence>
<accession>P10269</accession>
<reference key="1">
    <citation type="journal article" date="1987" name="Jpn. J. Genet.">
        <title>The entire nucleotide sequence of baboon endogenous virus DNA: a chimeric genome structure of murine type C and simian type D retroviruses.</title>
        <authorList>
            <person name="Kato S."/>
            <person name="Matsuo K."/>
            <person name="Nishimura N."/>
            <person name="Takahashi N."/>
            <person name="Takano T."/>
        </authorList>
    </citation>
    <scope>NUCLEOTIDE SEQUENCE [GENOMIC DNA]</scope>
</reference>
<proteinExistence type="inferred from homology"/>
<keyword id="KW-0165">Cleavage on pair of basic residues</keyword>
<keyword id="KW-0175">Coiled coil</keyword>
<keyword id="KW-1015">Disulfide bond</keyword>
<keyword id="KW-1169">Fusion of virus membrane with host cell membrane</keyword>
<keyword id="KW-1168">Fusion of virus membrane with host membrane</keyword>
<keyword id="KW-0325">Glycoprotein</keyword>
<keyword id="KW-1032">Host cell membrane</keyword>
<keyword id="KW-1043">Host membrane</keyword>
<keyword id="KW-0945">Host-virus interaction</keyword>
<keyword id="KW-0449">Lipoprotein</keyword>
<keyword id="KW-0472">Membrane</keyword>
<keyword id="KW-0564">Palmitate</keyword>
<keyword id="KW-0732">Signal</keyword>
<keyword id="KW-0812">Transmembrane</keyword>
<keyword id="KW-1133">Transmembrane helix</keyword>
<keyword id="KW-1161">Viral attachment to host cell</keyword>
<keyword id="KW-0261">Viral envelope protein</keyword>
<keyword id="KW-1162">Viral penetration into host cytoplasm</keyword>
<keyword id="KW-0946">Virion</keyword>
<keyword id="KW-1160">Virus entry into host cell</keyword>
<comment type="function">
    <text evidence="1">The surface protein (SU) attaches the virus to the host cell by binding to its receptor. This interaction triggers the refolding of the transmembrane protein (TM) and is thought to activate its fusogenic potential by unmasking its fusion peptide. Fusion occurs at the host cell plasma membrane (By similarity).</text>
</comment>
<comment type="function">
    <text evidence="1">The transmembrane protein (TM) acts as a class I viral fusion protein. Under the current model, the protein has at least 3 conformational states: pre-fusion native state, pre-hairpin intermediate state, and post-fusion hairpin state. During viral and target cell membrane fusion, the coiled coil regions (heptad repeats) assume a trimer-of-hairpins structure, positioning the fusion peptide in close proximity to the C-terminal region of the ectodomain. The formation of this structure appears to drive apposition and subsequent fusion of viral and target cell membranes. Membranes fusion leads to delivery of the nucleocapsid into the cytoplasm (By similarity).</text>
</comment>
<comment type="subunit">
    <text evidence="1">The mature envelope protein (Env) consists of a trimer of SU-TM heterodimers attached by a labile interchain disulfide bond.</text>
</comment>
<comment type="subcellular location">
    <molecule>Transmembrane protein</molecule>
    <subcellularLocation>
        <location evidence="1">Virion membrane</location>
        <topology evidence="1">Single-pass type I membrane protein</topology>
    </subcellularLocation>
    <subcellularLocation>
        <location evidence="1">Host cell membrane</location>
        <topology evidence="1">Single-pass type I membrane protein</topology>
    </subcellularLocation>
    <text evidence="1">It is probably concentrated at the site of budding and incorporated into the virions possibly by contacts between the cytoplasmic tail of Env and the N-terminus of Gag.</text>
</comment>
<comment type="subcellular location">
    <molecule>Surface protein</molecule>
    <subcellularLocation>
        <location evidence="1">Virion membrane</location>
        <topology evidence="1">Peripheral membrane protein</topology>
    </subcellularLocation>
    <subcellularLocation>
        <location evidence="1">Host cell membrane</location>
        <topology evidence="1">Peripheral membrane protein</topology>
    </subcellularLocation>
    <text evidence="1">The surface protein is not anchored to the viral envelope, but associates with the extravirion surface through its binding to TM. It is probably concentrated at the site of budding and incorporated into the virions possibly by contacts between the cytoplasmic tail of Env and the N-terminus of Gag (By similarity).</text>
</comment>
<comment type="subcellular location">
    <molecule>R-peptide</molecule>
    <subcellularLocation>
        <location>Host cell membrane</location>
        <topology>Peripheral membrane protein</topology>
    </subcellularLocation>
    <text evidence="1">The R-peptide is membrane-associated through its palmitate.</text>
</comment>
<comment type="domain">
    <text evidence="1">The 17 amino acids long immunosuppressive region is present in many retroviral envelope proteins. Synthetic peptides derived from this relatively conserved sequence inhibit immune function in vitro and in vivo (By similarity).</text>
</comment>
<comment type="domain">
    <text>The YXXL motif is involved in determining the exact site of viral release at the surface of infected mononuclear cells and promotes endocytosis.</text>
</comment>
<comment type="PTM">
    <text evidence="1">Specific enzymatic cleavages in vivo yield mature proteins. Envelope glycoproteins are synthesized as an inactive precursor that is N-glycosylated and processed likely by host cell furin or by a furin-like protease in the Golgi to yield the mature SU and TM proteins. The cleavage site between SU and TM requires the minimal sequence [KR]-X-[KR]-R. The R-peptide is released from the C-terminus of the cytoplasmic tail of the TM protein upon particle formation as a result of proteolytic cleavage by the viral protease. Cleavage of this peptide is required for TM to become fusogenic (By similarity).</text>
</comment>
<comment type="PTM">
    <text evidence="1">The CXXC motif is highly conserved across a broad range of retroviral envelope proteins. It is thought to participate in the formation of a labile disulfide bond possibly with the CX6CC motif present in the transmembrane protein. Isomerization of the intersubunit disulfide bond to an SU intrachain disulfide bond is thought to occur upon receptor recognition in order to allow membrane fusion (By similarity).</text>
</comment>
<comment type="PTM">
    <text evidence="1">The transmembrane protein is palmitoylated.</text>
</comment>
<organism>
    <name type="scientific">Baboon endogenous virus (strain M7)</name>
    <dbReference type="NCBI Taxonomy" id="11764"/>
    <lineage>
        <taxon>Viruses</taxon>
        <taxon>Riboviria</taxon>
        <taxon>Pararnavirae</taxon>
        <taxon>Artverviricota</taxon>
        <taxon>Revtraviricetes</taxon>
        <taxon>Ortervirales</taxon>
        <taxon>Retroviridae</taxon>
        <taxon>Orthoretrovirinae</taxon>
        <taxon>Gammaretrovirus</taxon>
        <taxon>Baboon endogenous virus</taxon>
    </lineage>
</organism>
<gene>
    <name type="primary">env</name>
</gene>
<protein>
    <recommendedName>
        <fullName>Envelope glycoprotein</fullName>
    </recommendedName>
    <alternativeName>
        <fullName>Env polyprotein</fullName>
    </alternativeName>
    <component>
        <recommendedName>
            <fullName>Surface protein</fullName>
            <shortName>SU</shortName>
        </recommendedName>
        <alternativeName>
            <fullName>Glycoprotein 70</fullName>
            <shortName>gp70</shortName>
        </alternativeName>
    </component>
    <component>
        <recommendedName>
            <fullName>Transmembrane protein</fullName>
            <shortName>TM</shortName>
        </recommendedName>
        <alternativeName>
            <fullName>Glycoprotein p20E</fullName>
        </alternativeName>
    </component>
    <component>
        <recommendedName>
            <fullName>R-peptide</fullName>
        </recommendedName>
        <alternativeName>
            <fullName>p2E</fullName>
        </alternativeName>
    </component>
</protein>
<dbReference type="EMBL" id="D10032">
    <property type="protein sequence ID" value="BAA00924.1"/>
    <property type="molecule type" value="Genomic_DNA"/>
</dbReference>
<dbReference type="EMBL" id="X05470">
    <property type="protein sequence ID" value="CAA29028.1"/>
    <property type="molecule type" value="Genomic_DNA"/>
</dbReference>
<dbReference type="PIR" id="JT0262">
    <property type="entry name" value="VCMVM7"/>
</dbReference>
<dbReference type="RefSeq" id="YP_009109691.1">
    <property type="nucleotide sequence ID" value="NC_022517.1"/>
</dbReference>
<dbReference type="SMR" id="P10269"/>
<dbReference type="GlyCosmos" id="P10269">
    <property type="glycosylation" value="11 sites, No reported glycans"/>
</dbReference>
<dbReference type="GeneID" id="22318530"/>
<dbReference type="KEGG" id="vg:22318530"/>
<dbReference type="Proteomes" id="UP000007443">
    <property type="component" value="Genome"/>
</dbReference>
<dbReference type="GO" id="GO:0020002">
    <property type="term" value="C:host cell plasma membrane"/>
    <property type="evidence" value="ECO:0007669"/>
    <property type="project" value="UniProtKB-SubCell"/>
</dbReference>
<dbReference type="GO" id="GO:0016020">
    <property type="term" value="C:membrane"/>
    <property type="evidence" value="ECO:0007669"/>
    <property type="project" value="UniProtKB-KW"/>
</dbReference>
<dbReference type="GO" id="GO:0019031">
    <property type="term" value="C:viral envelope"/>
    <property type="evidence" value="ECO:0007669"/>
    <property type="project" value="UniProtKB-KW"/>
</dbReference>
<dbReference type="GO" id="GO:0055036">
    <property type="term" value="C:virion membrane"/>
    <property type="evidence" value="ECO:0007669"/>
    <property type="project" value="UniProtKB-SubCell"/>
</dbReference>
<dbReference type="GO" id="GO:0019064">
    <property type="term" value="P:fusion of virus membrane with host plasma membrane"/>
    <property type="evidence" value="ECO:0007669"/>
    <property type="project" value="UniProtKB-KW"/>
</dbReference>
<dbReference type="GO" id="GO:0046718">
    <property type="term" value="P:symbiont entry into host cell"/>
    <property type="evidence" value="ECO:0007669"/>
    <property type="project" value="UniProtKB-KW"/>
</dbReference>
<dbReference type="GO" id="GO:0019062">
    <property type="term" value="P:virion attachment to host cell"/>
    <property type="evidence" value="ECO:0007669"/>
    <property type="project" value="UniProtKB-KW"/>
</dbReference>
<dbReference type="CDD" id="cd09851">
    <property type="entry name" value="HTLV-1-like_HR1-HR2"/>
    <property type="match status" value="1"/>
</dbReference>
<dbReference type="Gene3D" id="1.10.287.210">
    <property type="match status" value="1"/>
</dbReference>
<dbReference type="InterPro" id="IPR018154">
    <property type="entry name" value="TLV/ENV_coat_polyprotein"/>
</dbReference>
<dbReference type="PANTHER" id="PTHR10424:SF75">
    <property type="entry name" value="ENDOGENOUS RETROVIRUS GROUP S71 MEMBER 1 ENV POLYPROTEIN"/>
    <property type="match status" value="1"/>
</dbReference>
<dbReference type="PANTHER" id="PTHR10424">
    <property type="entry name" value="VIRAL ENVELOPE PROTEIN"/>
    <property type="match status" value="1"/>
</dbReference>
<dbReference type="Pfam" id="PF00429">
    <property type="entry name" value="TLV_coat"/>
    <property type="match status" value="1"/>
</dbReference>
<dbReference type="SUPFAM" id="SSF58069">
    <property type="entry name" value="Virus ectodomain"/>
    <property type="match status" value="1"/>
</dbReference>
<feature type="signal peptide" evidence="2">
    <location>
        <begin position="1"/>
        <end position="18"/>
    </location>
</feature>
<feature type="chain" id="PRO_0000239549" description="Envelope glycoprotein">
    <location>
        <begin position="19"/>
        <end position="563"/>
    </location>
</feature>
<feature type="chain" id="PRO_0000040687" description="Surface protein" evidence="1">
    <location>
        <begin position="19"/>
        <end position="376"/>
    </location>
</feature>
<feature type="chain" id="PRO_0000040688" description="Transmembrane protein" evidence="1">
    <location>
        <begin position="377"/>
        <end position="546"/>
    </location>
</feature>
<feature type="peptide" id="PRO_0000239550" description="R-peptide" evidence="1">
    <location>
        <begin position="547"/>
        <end position="563"/>
    </location>
</feature>
<feature type="topological domain" description="Extracellular" evidence="2">
    <location>
        <begin position="19"/>
        <end position="503"/>
    </location>
</feature>
<feature type="transmembrane region" description="Helical" evidence="2">
    <location>
        <begin position="504"/>
        <end position="524"/>
    </location>
</feature>
<feature type="topological domain" description="Cytoplasmic" evidence="2">
    <location>
        <begin position="525"/>
        <end position="563"/>
    </location>
</feature>
<feature type="region of interest" description="Fusion peptide" evidence="2">
    <location>
        <begin position="380"/>
        <end position="400"/>
    </location>
</feature>
<feature type="region of interest" description="Immunosuppression" evidence="1">
    <location>
        <begin position="440"/>
        <end position="456"/>
    </location>
</feature>
<feature type="coiled-coil region" evidence="2">
    <location>
        <begin position="401"/>
        <end position="451"/>
    </location>
</feature>
<feature type="coiled-coil region" evidence="2">
    <location>
        <begin position="461"/>
        <end position="497"/>
    </location>
</feature>
<feature type="short sequence motif" description="CXXC">
    <location>
        <begin position="236"/>
        <end position="239"/>
    </location>
</feature>
<feature type="short sequence motif" description="CX6CC">
    <location>
        <begin position="457"/>
        <end position="465"/>
    </location>
</feature>
<feature type="short sequence motif" description="YXXL motif; contains endocytosis signal" evidence="1">
    <location>
        <begin position="552"/>
        <end position="555"/>
    </location>
</feature>
<feature type="site" description="Cleavage; by host" evidence="1">
    <location>
        <begin position="376"/>
        <end position="377"/>
    </location>
</feature>
<feature type="site" description="Cleavage; by viral protease" evidence="1">
    <location>
        <begin position="546"/>
        <end position="547"/>
    </location>
</feature>
<feature type="lipid moiety-binding region" description="S-palmitoyl cysteine; by host" evidence="1">
    <location>
        <position position="527"/>
    </location>
</feature>
<feature type="glycosylation site" description="N-linked (GlcNAc...) asparagine; by host" evidence="2">
    <location>
        <position position="113"/>
    </location>
</feature>
<feature type="glycosylation site" description="N-linked (GlcNAc...) asparagine; by host" evidence="2">
    <location>
        <position position="219"/>
    </location>
</feature>
<feature type="glycosylation site" description="N-linked (GlcNAc...) asparagine; by host" evidence="2">
    <location>
        <position position="229"/>
    </location>
</feature>
<feature type="glycosylation site" description="N-linked (GlcNAc...) asparagine; by host" evidence="2">
    <location>
        <position position="264"/>
    </location>
</feature>
<feature type="glycosylation site" description="N-linked (GlcNAc...) asparagine; by host" evidence="2">
    <location>
        <position position="282"/>
    </location>
</feature>
<feature type="glycosylation site" description="N-linked (GlcNAc...) asparagine; by host" evidence="2">
    <location>
        <position position="292"/>
    </location>
</feature>
<feature type="glycosylation site" description="N-linked (GlcNAc...) asparagine; by host" evidence="2">
    <location>
        <position position="306"/>
    </location>
</feature>
<feature type="glycosylation site" description="N-linked (GlcNAc...) asparagine; by host" evidence="2">
    <location>
        <position position="312"/>
    </location>
</feature>
<feature type="glycosylation site" description="N-linked (GlcNAc...) asparagine; by host" evidence="2">
    <location>
        <position position="321"/>
    </location>
</feature>
<feature type="glycosylation site" description="N-linked (GlcNAc...) asparagine; by host" evidence="2">
    <location>
        <position position="339"/>
    </location>
</feature>
<feature type="glycosylation site" description="N-linked (GlcNAc...) asparagine; by host" evidence="2">
    <location>
        <position position="469"/>
    </location>
</feature>
<feature type="disulfide bond" description="Interchain (between SU and TM chains, or C-239 with C-465); in linked form" evidence="1">
    <location>
        <begin position="236"/>
        <end position="465"/>
    </location>
</feature>
<feature type="disulfide bond" evidence="1">
    <location>
        <begin position="236"/>
        <end position="239"/>
    </location>
</feature>
<feature type="disulfide bond" evidence="1">
    <location>
        <begin position="457"/>
        <end position="464"/>
    </location>
</feature>
<name>ENV_BAEVM</name>
<organismHost>
    <name type="scientific">Papio</name>
    <name type="common">baboons</name>
    <dbReference type="NCBI Taxonomy" id="9554"/>
</organismHost>
<organismHost>
    <name type="scientific">Theropithecus gelada</name>
    <name type="common">Gelada baboon</name>
    <dbReference type="NCBI Taxonomy" id="9565"/>
</organismHost>
<evidence type="ECO:0000250" key="1"/>
<evidence type="ECO:0000255" key="2"/>